<feature type="chain" id="PRO_0000120376" description="Adenosylmethionine-8-amino-7-oxononanoate aminotransferase">
    <location>
        <begin position="1"/>
        <end position="425"/>
    </location>
</feature>
<feature type="binding site" evidence="1">
    <location>
        <position position="54"/>
    </location>
    <ligand>
        <name>substrate</name>
    </ligand>
</feature>
<feature type="binding site" evidence="1">
    <location>
        <begin position="114"/>
        <end position="115"/>
    </location>
    <ligand>
        <name>pyridoxal 5'-phosphate</name>
        <dbReference type="ChEBI" id="CHEBI:597326"/>
    </ligand>
</feature>
<feature type="binding site" evidence="1">
    <location>
        <position position="146"/>
    </location>
    <ligand>
        <name>substrate</name>
    </ligand>
</feature>
<feature type="binding site" evidence="1">
    <location>
        <position position="248"/>
    </location>
    <ligand>
        <name>pyridoxal 5'-phosphate</name>
        <dbReference type="ChEBI" id="CHEBI:597326"/>
    </ligand>
</feature>
<feature type="binding site" evidence="1">
    <location>
        <position position="277"/>
    </location>
    <ligand>
        <name>substrate</name>
    </ligand>
</feature>
<feature type="binding site" evidence="1">
    <location>
        <position position="310"/>
    </location>
    <ligand>
        <name>substrate</name>
    </ligand>
</feature>
<feature type="binding site" evidence="1">
    <location>
        <begin position="311"/>
        <end position="312"/>
    </location>
    <ligand>
        <name>pyridoxal 5'-phosphate</name>
        <dbReference type="ChEBI" id="CHEBI:597326"/>
    </ligand>
</feature>
<feature type="binding site" evidence="1">
    <location>
        <position position="394"/>
    </location>
    <ligand>
        <name>substrate</name>
    </ligand>
</feature>
<feature type="site" description="Participates in the substrate recognition with KAPA and in a stacking interaction with the adenine ring of SAM" evidence="1">
    <location>
        <position position="19"/>
    </location>
</feature>
<feature type="modified residue" description="N6-(pyridoxal phosphate)lysine" evidence="1">
    <location>
        <position position="277"/>
    </location>
</feature>
<sequence>MSVTASDLAFDQRHIWHPYTSMSRPLPCYPIESASGVELQLADGRSLVDGMSSWWAAIHGYNHPRLNQAASQQLEKMSHVMFGGITHPAAISLCRRLVEMTPEALQCVFLADSGSVAVEVSLKMALQYWQARGERRQRILTLRHGYHGDTFGAMSVCDPDNSMHSLYQGYLAPHLFATAPQCRFDEEWREEDIAPFAALLEQHAGEVAAVILEPVVQGAGGMRIYHPTYLKRVRDVVRVAIKLLLIADEIATGFGRTGKLFACEHAQVVPDILCLGKALTGGYMTLSATLTTRHVAETISNGAAGCFMHGPTFMGNPLACAVADASLALLAENRWQAQVSAIETQLKRELLPLGRCRRWPHVRVLGAIGVVEMREPVDVAELQRGFVERGVWIRPFGKLIYLMPPYIIEAEQLSRLTAAVADAAR</sequence>
<comment type="function">
    <text evidence="1 2">Catalyzes the transfer of the alpha-amino group from S-adenosyl-L-methionine (SAM) to 7-keto-8-aminopelargonic acid (KAPA) to form 7,8-diaminopelargonic acid (DAPA). It is the only aminotransferase known to utilize SAM as an amino donor.</text>
</comment>
<comment type="catalytic activity">
    <reaction evidence="1">
        <text>(8S)-8-amino-7-oxononanoate + S-adenosyl-L-methionine = S-adenosyl-4-methylsulfanyl-2-oxobutanoate + (7R,8S)-7,8-diammoniononanoate</text>
        <dbReference type="Rhea" id="RHEA:16861"/>
        <dbReference type="ChEBI" id="CHEBI:16490"/>
        <dbReference type="ChEBI" id="CHEBI:59789"/>
        <dbReference type="ChEBI" id="CHEBI:149468"/>
        <dbReference type="ChEBI" id="CHEBI:149469"/>
        <dbReference type="EC" id="2.6.1.62"/>
    </reaction>
</comment>
<comment type="cofactor">
    <cofactor evidence="1">
        <name>pyridoxal 5'-phosphate</name>
        <dbReference type="ChEBI" id="CHEBI:597326"/>
    </cofactor>
</comment>
<comment type="pathway">
    <text evidence="1">Cofactor biosynthesis; biotin biosynthesis; 7,8-diaminononanoate from 8-amino-7-oxononanoate (SAM route): step 1/1.</text>
</comment>
<comment type="subunit">
    <text evidence="1">Homodimer.</text>
</comment>
<comment type="subcellular location">
    <subcellularLocation>
        <location evidence="1">Cytoplasm</location>
    </subcellularLocation>
</comment>
<comment type="similarity">
    <text evidence="1">Belongs to the class-III pyridoxal-phosphate-dependent aminotransferase family. BioA subfamily.</text>
</comment>
<reference key="1">
    <citation type="journal article" date="1993" name="Appl. Environ. Microbiol.">
        <title>Molecular breeding of a biotin-hyperproducing Serratia marcescens strain.</title>
        <authorList>
            <person name="Sakurai N."/>
            <person name="Imai Y."/>
            <person name="Masuda M."/>
            <person name="Komatsubara S."/>
            <person name="Tosa T."/>
        </authorList>
    </citation>
    <scope>NUCLEOTIDE SEQUENCE [GENOMIC DNA]</scope>
    <scope>FUNCTION</scope>
    <source>
        <strain>Sr41 / TLr156</strain>
    </source>
</reference>
<evidence type="ECO:0000255" key="1">
    <source>
        <dbReference type="HAMAP-Rule" id="MF_00834"/>
    </source>
</evidence>
<evidence type="ECO:0000269" key="2">
    <source>
    </source>
</evidence>
<accession>P36568</accession>
<dbReference type="EC" id="2.6.1.62" evidence="1"/>
<dbReference type="EMBL" id="D17468">
    <property type="protein sequence ID" value="BAA04284.1"/>
    <property type="molecule type" value="Genomic_DNA"/>
</dbReference>
<dbReference type="SMR" id="P36568"/>
<dbReference type="STRING" id="273526.SMDB11_0559"/>
<dbReference type="UniPathway" id="UPA00078">
    <property type="reaction ID" value="UER00160"/>
</dbReference>
<dbReference type="GO" id="GO:0005737">
    <property type="term" value="C:cytoplasm"/>
    <property type="evidence" value="ECO:0007669"/>
    <property type="project" value="UniProtKB-SubCell"/>
</dbReference>
<dbReference type="GO" id="GO:0004015">
    <property type="term" value="F:adenosylmethionine-8-amino-7-oxononanoate transaminase activity"/>
    <property type="evidence" value="ECO:0007669"/>
    <property type="project" value="UniProtKB-UniRule"/>
</dbReference>
<dbReference type="GO" id="GO:0030170">
    <property type="term" value="F:pyridoxal phosphate binding"/>
    <property type="evidence" value="ECO:0007669"/>
    <property type="project" value="UniProtKB-UniRule"/>
</dbReference>
<dbReference type="GO" id="GO:0009102">
    <property type="term" value="P:biotin biosynthetic process"/>
    <property type="evidence" value="ECO:0007669"/>
    <property type="project" value="UniProtKB-UniRule"/>
</dbReference>
<dbReference type="CDD" id="cd00610">
    <property type="entry name" value="OAT_like"/>
    <property type="match status" value="1"/>
</dbReference>
<dbReference type="FunFam" id="3.40.640.10:FF:000041">
    <property type="entry name" value="Adenosylmethionine-8-amino-7-oxononanoate aminotransferase"/>
    <property type="match status" value="1"/>
</dbReference>
<dbReference type="Gene3D" id="3.90.1150.10">
    <property type="entry name" value="Aspartate Aminotransferase, domain 1"/>
    <property type="match status" value="1"/>
</dbReference>
<dbReference type="Gene3D" id="3.40.640.10">
    <property type="entry name" value="Type I PLP-dependent aspartate aminotransferase-like (Major domain)"/>
    <property type="match status" value="1"/>
</dbReference>
<dbReference type="HAMAP" id="MF_00834">
    <property type="entry name" value="BioA"/>
    <property type="match status" value="1"/>
</dbReference>
<dbReference type="InterPro" id="IPR005814">
    <property type="entry name" value="Aminotrans_3"/>
</dbReference>
<dbReference type="InterPro" id="IPR049704">
    <property type="entry name" value="Aminotrans_3_PPA_site"/>
</dbReference>
<dbReference type="InterPro" id="IPR005815">
    <property type="entry name" value="BioA"/>
</dbReference>
<dbReference type="InterPro" id="IPR015424">
    <property type="entry name" value="PyrdxlP-dep_Trfase"/>
</dbReference>
<dbReference type="InterPro" id="IPR015421">
    <property type="entry name" value="PyrdxlP-dep_Trfase_major"/>
</dbReference>
<dbReference type="InterPro" id="IPR015422">
    <property type="entry name" value="PyrdxlP-dep_Trfase_small"/>
</dbReference>
<dbReference type="NCBIfam" id="TIGR00508">
    <property type="entry name" value="bioA"/>
    <property type="match status" value="1"/>
</dbReference>
<dbReference type="NCBIfam" id="NF004624">
    <property type="entry name" value="PRK05964.1"/>
    <property type="match status" value="1"/>
</dbReference>
<dbReference type="NCBIfam" id="NF005940">
    <property type="entry name" value="PRK07986.1"/>
    <property type="match status" value="1"/>
</dbReference>
<dbReference type="PANTHER" id="PTHR42684">
    <property type="entry name" value="ADENOSYLMETHIONINE-8-AMINO-7-OXONONANOATE AMINOTRANSFERASE"/>
    <property type="match status" value="1"/>
</dbReference>
<dbReference type="PANTHER" id="PTHR42684:SF17">
    <property type="entry name" value="ADENOSYLMETHIONINE-8-AMINO-7-OXONONANOATE AMINOTRANSFERASE"/>
    <property type="match status" value="1"/>
</dbReference>
<dbReference type="Pfam" id="PF00202">
    <property type="entry name" value="Aminotran_3"/>
    <property type="match status" value="1"/>
</dbReference>
<dbReference type="SUPFAM" id="SSF53383">
    <property type="entry name" value="PLP-dependent transferases"/>
    <property type="match status" value="1"/>
</dbReference>
<dbReference type="PROSITE" id="PS00600">
    <property type="entry name" value="AA_TRANSFER_CLASS_3"/>
    <property type="match status" value="1"/>
</dbReference>
<proteinExistence type="inferred from homology"/>
<gene>
    <name evidence="1" type="primary">bioA</name>
</gene>
<name>BIOA_SERMA</name>
<keyword id="KW-0032">Aminotransferase</keyword>
<keyword id="KW-0093">Biotin biosynthesis</keyword>
<keyword id="KW-0963">Cytoplasm</keyword>
<keyword id="KW-0663">Pyridoxal phosphate</keyword>
<keyword id="KW-0949">S-adenosyl-L-methionine</keyword>
<keyword id="KW-0808">Transferase</keyword>
<protein>
    <recommendedName>
        <fullName evidence="1">Adenosylmethionine-8-amino-7-oxononanoate aminotransferase</fullName>
        <ecNumber evidence="1">2.6.1.62</ecNumber>
    </recommendedName>
    <alternativeName>
        <fullName evidence="1">7,8-diamino-pelargonic acid aminotransferase</fullName>
        <shortName evidence="1">DAPA AT</shortName>
        <shortName evidence="1">DAPA aminotransferase</shortName>
    </alternativeName>
    <alternativeName>
        <fullName evidence="1">7,8-diaminononanoate synthase</fullName>
        <shortName evidence="1">DANS</shortName>
    </alternativeName>
    <alternativeName>
        <fullName evidence="1">Diaminopelargonic acid synthase</fullName>
    </alternativeName>
</protein>
<organism>
    <name type="scientific">Serratia marcescens</name>
    <dbReference type="NCBI Taxonomy" id="615"/>
    <lineage>
        <taxon>Bacteria</taxon>
        <taxon>Pseudomonadati</taxon>
        <taxon>Pseudomonadota</taxon>
        <taxon>Gammaproteobacteria</taxon>
        <taxon>Enterobacterales</taxon>
        <taxon>Yersiniaceae</taxon>
        <taxon>Serratia</taxon>
    </lineage>
</organism>